<feature type="chain" id="PRO_0000320531" description="Actin-related protein 4A">
    <location>
        <begin position="1"/>
        <end position="145"/>
    </location>
</feature>
<feature type="region of interest" description="Disordered" evidence="1">
    <location>
        <begin position="47"/>
        <end position="66"/>
    </location>
</feature>
<feature type="compositionally biased region" description="Basic and acidic residues" evidence="1">
    <location>
        <begin position="55"/>
        <end position="64"/>
    </location>
</feature>
<feature type="sequence conflict" description="In Ref. 1; AAM53245." evidence="3" ref="1">
    <original>M</original>
    <variation>MG</variation>
    <location>
        <position position="1"/>
    </location>
</feature>
<protein>
    <recommendedName>
        <fullName>Actin-related protein 4A</fullName>
    </recommendedName>
    <alternativeName>
        <fullName>Actin-related protein 5</fullName>
    </alternativeName>
</protein>
<dbReference type="EMBL" id="AF507913">
    <property type="protein sequence ID" value="AAM53245.1"/>
    <property type="molecule type" value="mRNA"/>
</dbReference>
<dbReference type="EMBL" id="AC016662">
    <property type="protein sequence ID" value="AAG52523.1"/>
    <property type="molecule type" value="Genomic_DNA"/>
</dbReference>
<dbReference type="EMBL" id="CP002684">
    <property type="protein sequence ID" value="AEE35523.1"/>
    <property type="molecule type" value="Genomic_DNA"/>
</dbReference>
<dbReference type="EMBL" id="CP002684">
    <property type="protein sequence ID" value="ANM60797.1"/>
    <property type="molecule type" value="Genomic_DNA"/>
</dbReference>
<dbReference type="EMBL" id="BT029316">
    <property type="protein sequence ID" value="ABK32130.1"/>
    <property type="molecule type" value="mRNA"/>
</dbReference>
<dbReference type="EMBL" id="BK000424">
    <property type="protein sequence ID" value="DAA00029.1"/>
    <property type="molecule type" value="Genomic_DNA"/>
</dbReference>
<dbReference type="PIR" id="F96766">
    <property type="entry name" value="F96766"/>
</dbReference>
<dbReference type="RefSeq" id="NP_001323057.1">
    <property type="nucleotide sequence ID" value="NM_001334612.1"/>
</dbReference>
<dbReference type="RefSeq" id="NP_177531.1">
    <property type="nucleotide sequence ID" value="NM_106050.2"/>
</dbReference>
<dbReference type="SMR" id="Q9C9B2"/>
<dbReference type="BioGRID" id="28947">
    <property type="interactions" value="76"/>
</dbReference>
<dbReference type="FunCoup" id="Q9C9B2">
    <property type="interactions" value="20"/>
</dbReference>
<dbReference type="STRING" id="3702.Q9C9B2"/>
<dbReference type="PaxDb" id="3702-AT1G73910.1"/>
<dbReference type="ProteomicsDB" id="246890"/>
<dbReference type="EnsemblPlants" id="AT1G73910.1">
    <property type="protein sequence ID" value="AT1G73910.1"/>
    <property type="gene ID" value="AT1G73910"/>
</dbReference>
<dbReference type="EnsemblPlants" id="AT1G73910.2">
    <property type="protein sequence ID" value="AT1G73910.2"/>
    <property type="gene ID" value="AT1G73910"/>
</dbReference>
<dbReference type="GeneID" id="843728"/>
<dbReference type="Gramene" id="AT1G73910.1">
    <property type="protein sequence ID" value="AT1G73910.1"/>
    <property type="gene ID" value="AT1G73910"/>
</dbReference>
<dbReference type="Gramene" id="AT1G73910.2">
    <property type="protein sequence ID" value="AT1G73910.2"/>
    <property type="gene ID" value="AT1G73910"/>
</dbReference>
<dbReference type="KEGG" id="ath:AT1G73910"/>
<dbReference type="Araport" id="AT1G73910"/>
<dbReference type="TAIR" id="AT1G73910">
    <property type="gene designation" value="ARP4A"/>
</dbReference>
<dbReference type="eggNOG" id="KOG0676">
    <property type="taxonomic scope" value="Eukaryota"/>
</dbReference>
<dbReference type="HOGENOM" id="CLU_027965_7_4_1"/>
<dbReference type="InParanoid" id="Q9C9B2"/>
<dbReference type="OMA" id="SHIFCIR"/>
<dbReference type="PhylomeDB" id="Q9C9B2"/>
<dbReference type="PRO" id="PR:Q9C9B2"/>
<dbReference type="Proteomes" id="UP000006548">
    <property type="component" value="Chromosome 1"/>
</dbReference>
<dbReference type="ExpressionAtlas" id="Q9C9B2">
    <property type="expression patterns" value="baseline and differential"/>
</dbReference>
<dbReference type="FunFam" id="3.30.420.40:FF:000787">
    <property type="entry name" value="Actin-related protein 4A"/>
    <property type="match status" value="1"/>
</dbReference>
<dbReference type="Gene3D" id="3.30.420.40">
    <property type="match status" value="1"/>
</dbReference>
<dbReference type="InterPro" id="IPR004000">
    <property type="entry name" value="Actin"/>
</dbReference>
<dbReference type="InterPro" id="IPR043129">
    <property type="entry name" value="ATPase_NBD"/>
</dbReference>
<dbReference type="PANTHER" id="PTHR11937">
    <property type="entry name" value="ACTIN"/>
    <property type="match status" value="1"/>
</dbReference>
<dbReference type="Pfam" id="PF00022">
    <property type="entry name" value="Actin"/>
    <property type="match status" value="1"/>
</dbReference>
<dbReference type="SUPFAM" id="SSF53067">
    <property type="entry name" value="Actin-like ATPase domain"/>
    <property type="match status" value="1"/>
</dbReference>
<sequence length="145" mass="15993">MYGGDEVSAIVVDLGSHTCKAGYAGEDAPKAVFPSVVGAIDGNGMDIDDAANTTEDAKESDKEKGKRKLYTGSQALNFRRDQMEILSPTKDGIVTDWDMVDNVWDHAFRNCLMIDPTEHPMLLAEPPLNSQQQREKSGFSTFYRC</sequence>
<comment type="tissue specificity">
    <text evidence="2">Expressed in roots, leaves and flowers.</text>
</comment>
<comment type="similarity">
    <text evidence="3">Belongs to the actin family. ARP4 subfamily.</text>
</comment>
<name>ARP4A_ARATH</name>
<proteinExistence type="evidence at transcript level"/>
<gene>
    <name type="primary">ARP4A</name>
    <name type="synonym">ARP5</name>
    <name type="ordered locus">At1g73910</name>
    <name type="ORF">F2P9.22</name>
</gene>
<keyword id="KW-1185">Reference proteome</keyword>
<organism>
    <name type="scientific">Arabidopsis thaliana</name>
    <name type="common">Mouse-ear cress</name>
    <dbReference type="NCBI Taxonomy" id="3702"/>
    <lineage>
        <taxon>Eukaryota</taxon>
        <taxon>Viridiplantae</taxon>
        <taxon>Streptophyta</taxon>
        <taxon>Embryophyta</taxon>
        <taxon>Tracheophyta</taxon>
        <taxon>Spermatophyta</taxon>
        <taxon>Magnoliopsida</taxon>
        <taxon>eudicotyledons</taxon>
        <taxon>Gunneridae</taxon>
        <taxon>Pentapetalae</taxon>
        <taxon>rosids</taxon>
        <taxon>malvids</taxon>
        <taxon>Brassicales</taxon>
        <taxon>Brassicaceae</taxon>
        <taxon>Camelineae</taxon>
        <taxon>Arabidopsis</taxon>
    </lineage>
</organism>
<reference key="1">
    <citation type="journal article" date="2002" name="Plant Physiol.">
        <title>Arabidopsis contains ancient classes of differentially expressed actin-related protein genes.</title>
        <authorList>
            <person name="McKinney E.C."/>
            <person name="Kandasamy M.K."/>
            <person name="Meagher R.B."/>
        </authorList>
    </citation>
    <scope>NUCLEOTIDE SEQUENCE [MRNA]</scope>
    <scope>IDENTIFICATION</scope>
    <scope>TISSUE SPECIFICITY</scope>
    <scope>GENE FAMILY</scope>
    <source>
        <strain>cv. Columbia</strain>
    </source>
</reference>
<reference key="2">
    <citation type="journal article" date="2000" name="Nature">
        <title>Sequence and analysis of chromosome 1 of the plant Arabidopsis thaliana.</title>
        <authorList>
            <person name="Theologis A."/>
            <person name="Ecker J.R."/>
            <person name="Palm C.J."/>
            <person name="Federspiel N.A."/>
            <person name="Kaul S."/>
            <person name="White O."/>
            <person name="Alonso J."/>
            <person name="Altafi H."/>
            <person name="Araujo R."/>
            <person name="Bowman C.L."/>
            <person name="Brooks S.Y."/>
            <person name="Buehler E."/>
            <person name="Chan A."/>
            <person name="Chao Q."/>
            <person name="Chen H."/>
            <person name="Cheuk R.F."/>
            <person name="Chin C.W."/>
            <person name="Chung M.K."/>
            <person name="Conn L."/>
            <person name="Conway A.B."/>
            <person name="Conway A.R."/>
            <person name="Creasy T.H."/>
            <person name="Dewar K."/>
            <person name="Dunn P."/>
            <person name="Etgu P."/>
            <person name="Feldblyum T.V."/>
            <person name="Feng J.-D."/>
            <person name="Fong B."/>
            <person name="Fujii C.Y."/>
            <person name="Gill J.E."/>
            <person name="Goldsmith A.D."/>
            <person name="Haas B."/>
            <person name="Hansen N.F."/>
            <person name="Hughes B."/>
            <person name="Huizar L."/>
            <person name="Hunter J.L."/>
            <person name="Jenkins J."/>
            <person name="Johnson-Hopson C."/>
            <person name="Khan S."/>
            <person name="Khaykin E."/>
            <person name="Kim C.J."/>
            <person name="Koo H.L."/>
            <person name="Kremenetskaia I."/>
            <person name="Kurtz D.B."/>
            <person name="Kwan A."/>
            <person name="Lam B."/>
            <person name="Langin-Hooper S."/>
            <person name="Lee A."/>
            <person name="Lee J.M."/>
            <person name="Lenz C.A."/>
            <person name="Li J.H."/>
            <person name="Li Y.-P."/>
            <person name="Lin X."/>
            <person name="Liu S.X."/>
            <person name="Liu Z.A."/>
            <person name="Luros J.S."/>
            <person name="Maiti R."/>
            <person name="Marziali A."/>
            <person name="Militscher J."/>
            <person name="Miranda M."/>
            <person name="Nguyen M."/>
            <person name="Nierman W.C."/>
            <person name="Osborne B.I."/>
            <person name="Pai G."/>
            <person name="Peterson J."/>
            <person name="Pham P.K."/>
            <person name="Rizzo M."/>
            <person name="Rooney T."/>
            <person name="Rowley D."/>
            <person name="Sakano H."/>
            <person name="Salzberg S.L."/>
            <person name="Schwartz J.R."/>
            <person name="Shinn P."/>
            <person name="Southwick A.M."/>
            <person name="Sun H."/>
            <person name="Tallon L.J."/>
            <person name="Tambunga G."/>
            <person name="Toriumi M.J."/>
            <person name="Town C.D."/>
            <person name="Utterback T."/>
            <person name="Van Aken S."/>
            <person name="Vaysberg M."/>
            <person name="Vysotskaia V.S."/>
            <person name="Walker M."/>
            <person name="Wu D."/>
            <person name="Yu G."/>
            <person name="Fraser C.M."/>
            <person name="Venter J.C."/>
            <person name="Davis R.W."/>
        </authorList>
    </citation>
    <scope>NUCLEOTIDE SEQUENCE [LARGE SCALE GENOMIC DNA]</scope>
    <source>
        <strain>cv. Columbia</strain>
    </source>
</reference>
<reference key="3">
    <citation type="journal article" date="2017" name="Plant J.">
        <title>Araport11: a complete reannotation of the Arabidopsis thaliana reference genome.</title>
        <authorList>
            <person name="Cheng C.Y."/>
            <person name="Krishnakumar V."/>
            <person name="Chan A.P."/>
            <person name="Thibaud-Nissen F."/>
            <person name="Schobel S."/>
            <person name="Town C.D."/>
        </authorList>
    </citation>
    <scope>GENOME REANNOTATION</scope>
    <source>
        <strain>cv. Columbia</strain>
    </source>
</reference>
<reference key="4">
    <citation type="submission" date="2006-11" db="EMBL/GenBank/DDBJ databases">
        <title>Arabidopsis ORF clones.</title>
        <authorList>
            <person name="Bautista V.R."/>
            <person name="Kim C.J."/>
            <person name="Chen H."/>
            <person name="Quinitio C."/>
            <person name="Ecker J.R."/>
        </authorList>
    </citation>
    <scope>NUCLEOTIDE SEQUENCE [LARGE SCALE MRNA]</scope>
    <source>
        <strain>cv. Columbia</strain>
    </source>
</reference>
<reference key="5">
    <citation type="journal article" date="2004" name="Trends Plant Sci.">
        <title>Plant actin-related proteins.</title>
        <authorList>
            <person name="Kandasamy M.K."/>
            <person name="Deal R.B."/>
            <person name="McKinney E.C."/>
            <person name="Meagher R.B."/>
        </authorList>
    </citation>
    <scope>REVIEW</scope>
    <scope>GENE FAMILY</scope>
    <scope>NOMENCLATURE</scope>
</reference>
<accession>Q9C9B2</accession>
<accession>Q8LKR1</accession>
<evidence type="ECO:0000256" key="1">
    <source>
        <dbReference type="SAM" id="MobiDB-lite"/>
    </source>
</evidence>
<evidence type="ECO:0000269" key="2">
    <source>
    </source>
</evidence>
<evidence type="ECO:0000305" key="3"/>